<reference key="1">
    <citation type="journal article" date="1997" name="Nature">
        <title>The nucleotide sequence of Saccharomyces cerevisiae chromosome XV.</title>
        <authorList>
            <person name="Dujon B."/>
            <person name="Albermann K."/>
            <person name="Aldea M."/>
            <person name="Alexandraki D."/>
            <person name="Ansorge W."/>
            <person name="Arino J."/>
            <person name="Benes V."/>
            <person name="Bohn C."/>
            <person name="Bolotin-Fukuhara M."/>
            <person name="Bordonne R."/>
            <person name="Boyer J."/>
            <person name="Camasses A."/>
            <person name="Casamayor A."/>
            <person name="Casas C."/>
            <person name="Cheret G."/>
            <person name="Cziepluch C."/>
            <person name="Daignan-Fornier B."/>
            <person name="Dang V.-D."/>
            <person name="de Haan M."/>
            <person name="Delius H."/>
            <person name="Durand P."/>
            <person name="Fairhead C."/>
            <person name="Feldmann H."/>
            <person name="Gaillon L."/>
            <person name="Galisson F."/>
            <person name="Gamo F.-J."/>
            <person name="Gancedo C."/>
            <person name="Goffeau A."/>
            <person name="Goulding S.E."/>
            <person name="Grivell L.A."/>
            <person name="Habbig B."/>
            <person name="Hand N.J."/>
            <person name="Hani J."/>
            <person name="Hattenhorst U."/>
            <person name="Hebling U."/>
            <person name="Hernando Y."/>
            <person name="Herrero E."/>
            <person name="Heumann K."/>
            <person name="Hiesel R."/>
            <person name="Hilger F."/>
            <person name="Hofmann B."/>
            <person name="Hollenberg C.P."/>
            <person name="Hughes B."/>
            <person name="Jauniaux J.-C."/>
            <person name="Kalogeropoulos A."/>
            <person name="Katsoulou C."/>
            <person name="Kordes E."/>
            <person name="Lafuente M.J."/>
            <person name="Landt O."/>
            <person name="Louis E.J."/>
            <person name="Maarse A.C."/>
            <person name="Madania A."/>
            <person name="Mannhaupt G."/>
            <person name="Marck C."/>
            <person name="Martin R.P."/>
            <person name="Mewes H.-W."/>
            <person name="Michaux G."/>
            <person name="Paces V."/>
            <person name="Parle-McDermott A.G."/>
            <person name="Pearson B.M."/>
            <person name="Perrin A."/>
            <person name="Pettersson B."/>
            <person name="Poch O."/>
            <person name="Pohl T.M."/>
            <person name="Poirey R."/>
            <person name="Portetelle D."/>
            <person name="Pujol A."/>
            <person name="Purnelle B."/>
            <person name="Ramezani Rad M."/>
            <person name="Rechmann S."/>
            <person name="Schwager C."/>
            <person name="Schweizer M."/>
            <person name="Sor F."/>
            <person name="Sterky F."/>
            <person name="Tarassov I.A."/>
            <person name="Teodoru C."/>
            <person name="Tettelin H."/>
            <person name="Thierry A."/>
            <person name="Tobiasch E."/>
            <person name="Tzermia M."/>
            <person name="Uhlen M."/>
            <person name="Unseld M."/>
            <person name="Valens M."/>
            <person name="Vandenbol M."/>
            <person name="Vetter I."/>
            <person name="Vlcek C."/>
            <person name="Voet M."/>
            <person name="Volckaert G."/>
            <person name="Voss H."/>
            <person name="Wambutt R."/>
            <person name="Wedler H."/>
            <person name="Wiemann S."/>
            <person name="Winsor B."/>
            <person name="Wolfe K.H."/>
            <person name="Zollner A."/>
            <person name="Zumstein E."/>
            <person name="Kleine K."/>
        </authorList>
    </citation>
    <scope>NUCLEOTIDE SEQUENCE [LARGE SCALE GENOMIC DNA]</scope>
    <source>
        <strain>ATCC 204508 / S288c</strain>
    </source>
</reference>
<reference key="2">
    <citation type="journal article" date="2014" name="G3 (Bethesda)">
        <title>The reference genome sequence of Saccharomyces cerevisiae: Then and now.</title>
        <authorList>
            <person name="Engel S.R."/>
            <person name="Dietrich F.S."/>
            <person name="Fisk D.G."/>
            <person name="Binkley G."/>
            <person name="Balakrishnan R."/>
            <person name="Costanzo M.C."/>
            <person name="Dwight S.S."/>
            <person name="Hitz B.C."/>
            <person name="Karra K."/>
            <person name="Nash R.S."/>
            <person name="Weng S."/>
            <person name="Wong E.D."/>
            <person name="Lloyd P."/>
            <person name="Skrzypek M.S."/>
            <person name="Miyasato S.R."/>
            <person name="Simison M."/>
            <person name="Cherry J.M."/>
        </authorList>
    </citation>
    <scope>GENOME REANNOTATION</scope>
    <source>
        <strain>ATCC 204508 / S288c</strain>
    </source>
</reference>
<reference key="3">
    <citation type="journal article" date="2005" name="Yeast">
        <title>New weakly expressed cell cycle-regulated genes in yeast.</title>
        <authorList>
            <person name="de Lichtenberg U."/>
            <person name="Wernersson R."/>
            <person name="Jensen T.S."/>
            <person name="Nielsen H.B."/>
            <person name="Fausboell A."/>
            <person name="Schmidt P."/>
            <person name="Hansen F.B."/>
            <person name="Knudsen S."/>
            <person name="Brunak S."/>
        </authorList>
    </citation>
    <scope>DEVELOPMENTAL STAGE</scope>
</reference>
<feature type="chain" id="PRO_0000235938" description="Uncharacterized protein YOR019W">
    <location>
        <begin position="1"/>
        <end position="730"/>
    </location>
</feature>
<feature type="region of interest" description="Disordered" evidence="1">
    <location>
        <begin position="615"/>
        <end position="667"/>
    </location>
</feature>
<feature type="region of interest" description="Disordered" evidence="1">
    <location>
        <begin position="684"/>
        <end position="730"/>
    </location>
</feature>
<feature type="compositionally biased region" description="Basic and acidic residues" evidence="1">
    <location>
        <begin position="615"/>
        <end position="625"/>
    </location>
</feature>
<feature type="compositionally biased region" description="Low complexity" evidence="1">
    <location>
        <begin position="653"/>
        <end position="667"/>
    </location>
</feature>
<feature type="compositionally biased region" description="Low complexity" evidence="1">
    <location>
        <begin position="684"/>
        <end position="701"/>
    </location>
</feature>
<feature type="compositionally biased region" description="Basic residues" evidence="1">
    <location>
        <begin position="713"/>
        <end position="723"/>
    </location>
</feature>
<dbReference type="EMBL" id="X87331">
    <property type="protein sequence ID" value="CAA60768.1"/>
    <property type="molecule type" value="Genomic_DNA"/>
</dbReference>
<dbReference type="EMBL" id="Z74927">
    <property type="protein sequence ID" value="CAA99209.1"/>
    <property type="molecule type" value="Genomic_DNA"/>
</dbReference>
<dbReference type="EMBL" id="BK006948">
    <property type="protein sequence ID" value="DAA10801.1"/>
    <property type="molecule type" value="Genomic_DNA"/>
</dbReference>
<dbReference type="PIR" id="S54625">
    <property type="entry name" value="S54625"/>
</dbReference>
<dbReference type="RefSeq" id="NP_014662.1">
    <property type="nucleotide sequence ID" value="NM_001183438.1"/>
</dbReference>
<dbReference type="SMR" id="Q99248"/>
<dbReference type="BioGRID" id="34423">
    <property type="interactions" value="48"/>
</dbReference>
<dbReference type="FunCoup" id="Q99248">
    <property type="interactions" value="38"/>
</dbReference>
<dbReference type="STRING" id="4932.YOR019W"/>
<dbReference type="iPTMnet" id="Q99248"/>
<dbReference type="PaxDb" id="4932-YOR019W"/>
<dbReference type="PeptideAtlas" id="Q99248"/>
<dbReference type="EnsemblFungi" id="YOR019W_mRNA">
    <property type="protein sequence ID" value="YOR019W"/>
    <property type="gene ID" value="YOR019W"/>
</dbReference>
<dbReference type="GeneID" id="854184"/>
<dbReference type="KEGG" id="sce:YOR019W"/>
<dbReference type="AGR" id="SGD:S000005545"/>
<dbReference type="SGD" id="S000005545">
    <property type="gene designation" value="YOR019W"/>
</dbReference>
<dbReference type="VEuPathDB" id="FungiDB:YOR019W"/>
<dbReference type="eggNOG" id="ENOG502RISH">
    <property type="taxonomic scope" value="Eukaryota"/>
</dbReference>
<dbReference type="GeneTree" id="ENSGT00940000176733"/>
<dbReference type="HOGENOM" id="CLU_012887_0_0_1"/>
<dbReference type="InParanoid" id="Q99248"/>
<dbReference type="OMA" id="WRRTENL"/>
<dbReference type="OrthoDB" id="843225at2759"/>
<dbReference type="BioCyc" id="YEAST:G3O-33567-MONOMER"/>
<dbReference type="BioGRID-ORCS" id="854184">
    <property type="hits" value="1 hit in 10 CRISPR screens"/>
</dbReference>
<dbReference type="PRO" id="PR:Q99248"/>
<dbReference type="Proteomes" id="UP000002311">
    <property type="component" value="Chromosome XV"/>
</dbReference>
<dbReference type="RNAct" id="Q99248">
    <property type="molecule type" value="protein"/>
</dbReference>
<dbReference type="GO" id="GO:0000422">
    <property type="term" value="P:autophagy of mitochondrion"/>
    <property type="evidence" value="ECO:0000315"/>
    <property type="project" value="SGD"/>
</dbReference>
<dbReference type="SUPFAM" id="SSF52402">
    <property type="entry name" value="Adenine nucleotide alpha hydrolases-like"/>
    <property type="match status" value="1"/>
</dbReference>
<evidence type="ECO:0000256" key="1">
    <source>
        <dbReference type="SAM" id="MobiDB-lite"/>
    </source>
</evidence>
<evidence type="ECO:0000269" key="2">
    <source>
    </source>
</evidence>
<proteinExistence type="evidence at transcript level"/>
<gene>
    <name type="ordered locus">YOR019W</name>
    <name type="ORF">OR26.09</name>
</gene>
<name>YO019_YEAST</name>
<accession>Q99248</accession>
<accession>D6W285</accession>
<keyword id="KW-0131">Cell cycle</keyword>
<keyword id="KW-1185">Reference proteome</keyword>
<protein>
    <recommendedName>
        <fullName>Uncharacterized protein YOR019W</fullName>
    </recommendedName>
</protein>
<comment type="developmental stage">
    <text evidence="2">Periodic expression during the cell cycle with a peak at S phase.</text>
</comment>
<sequence length="730" mass="83366">MISVCPQNDLQKCYRSLTFDVPGQQFEERNEQNLKKRAKKKGSFQPSVAFDTVPSTAGYSSIDDSREGFKGVPVPNYYTMEECYDDETDSFSPNLQYYLRDTFQSSPFLNTRKENKSESSSFPMRSSKLLEKNSDIKKYFLVSKNGKIVRRDYPSTPVIVNETLMINRFEKNWIKLWRQRKLQINERLNDKKKWFTYPELIFSEERIKPLYRGDDSAPCTKEQKRKHKILQQKVGYPNNPKTIVCHINGKKHTWVALDWTVYKFARNLDHIVVITTLPKMISNRKKTAKDDTEWAPGYQKEVIDQKLNDIFDYILQLVKVVKISVKITLEIIVGKIKKSLVDVINVHTPDFLVLATLKHERNENLITYKSKKLTDVFPVSYPIPTFVVPSKRMYSFELNLQREVNEHYVSKNHMKHEHTDVESMSSSMFKKNTISDISSHISVDSYAEDFKRQGYIKKQFNTSNDSIPRKLTGLAQHSRRKITGDIEKLQDDEKDRECTKEKLLLKKIDIIIRESLKSSLAIETLPGKNVSQSSHGDQISSFKNALIGNGSKNTKFRKSLIPYSSSEEQNTTTTIKLSSSPTSQIKFATSVKHKDGRAALGKARNLPDIRHSISFDKENSFDPSDKSSSVDNSIPLRKVKSAGALRKVKTNDSSSSAGSKKSSSSFSTVNTFTGGGVGIFKVFKSGSSSGNKSSSRRNSSSGDVFESDDRNDKKKKKKKKKKSLFLFGKI</sequence>
<organism>
    <name type="scientific">Saccharomyces cerevisiae (strain ATCC 204508 / S288c)</name>
    <name type="common">Baker's yeast</name>
    <dbReference type="NCBI Taxonomy" id="559292"/>
    <lineage>
        <taxon>Eukaryota</taxon>
        <taxon>Fungi</taxon>
        <taxon>Dikarya</taxon>
        <taxon>Ascomycota</taxon>
        <taxon>Saccharomycotina</taxon>
        <taxon>Saccharomycetes</taxon>
        <taxon>Saccharomycetales</taxon>
        <taxon>Saccharomycetaceae</taxon>
        <taxon>Saccharomyces</taxon>
    </lineage>
</organism>